<sequence>MSEQNSRPQNSERPQRSRRPQGGPRRRRKVDYIAANHIEFIDYKNTELLERFISERGKILPRRVTGTSAKNQRKVTTAIKRARIMALLPFVTED</sequence>
<dbReference type="EMBL" id="DQ489736">
    <property type="protein sequence ID" value="ACA82004.1"/>
    <property type="molecule type" value="Genomic_DNA"/>
</dbReference>
<dbReference type="RefSeq" id="WP_004904499.1">
    <property type="nucleotide sequence ID" value="NC_010471.1"/>
</dbReference>
<dbReference type="SMR" id="B1MWV2"/>
<dbReference type="STRING" id="349519.LCK_00171"/>
<dbReference type="GeneID" id="66531086"/>
<dbReference type="KEGG" id="lci:LCK_00171"/>
<dbReference type="eggNOG" id="COG0238">
    <property type="taxonomic scope" value="Bacteria"/>
</dbReference>
<dbReference type="HOGENOM" id="CLU_148710_2_2_9"/>
<dbReference type="OrthoDB" id="9812008at2"/>
<dbReference type="Proteomes" id="UP000002166">
    <property type="component" value="Chromosome"/>
</dbReference>
<dbReference type="GO" id="GO:0022627">
    <property type="term" value="C:cytosolic small ribosomal subunit"/>
    <property type="evidence" value="ECO:0007669"/>
    <property type="project" value="TreeGrafter"/>
</dbReference>
<dbReference type="GO" id="GO:0070181">
    <property type="term" value="F:small ribosomal subunit rRNA binding"/>
    <property type="evidence" value="ECO:0007669"/>
    <property type="project" value="TreeGrafter"/>
</dbReference>
<dbReference type="GO" id="GO:0003735">
    <property type="term" value="F:structural constituent of ribosome"/>
    <property type="evidence" value="ECO:0007669"/>
    <property type="project" value="InterPro"/>
</dbReference>
<dbReference type="GO" id="GO:0006412">
    <property type="term" value="P:translation"/>
    <property type="evidence" value="ECO:0007669"/>
    <property type="project" value="UniProtKB-UniRule"/>
</dbReference>
<dbReference type="FunFam" id="4.10.640.10:FF:000003">
    <property type="entry name" value="30S ribosomal protein S18"/>
    <property type="match status" value="1"/>
</dbReference>
<dbReference type="Gene3D" id="4.10.640.10">
    <property type="entry name" value="Ribosomal protein S18"/>
    <property type="match status" value="1"/>
</dbReference>
<dbReference type="HAMAP" id="MF_00270">
    <property type="entry name" value="Ribosomal_bS18"/>
    <property type="match status" value="1"/>
</dbReference>
<dbReference type="InterPro" id="IPR001648">
    <property type="entry name" value="Ribosomal_bS18"/>
</dbReference>
<dbReference type="InterPro" id="IPR018275">
    <property type="entry name" value="Ribosomal_bS18_CS"/>
</dbReference>
<dbReference type="InterPro" id="IPR036870">
    <property type="entry name" value="Ribosomal_bS18_sf"/>
</dbReference>
<dbReference type="NCBIfam" id="TIGR00165">
    <property type="entry name" value="S18"/>
    <property type="match status" value="1"/>
</dbReference>
<dbReference type="PANTHER" id="PTHR13479">
    <property type="entry name" value="30S RIBOSOMAL PROTEIN S18"/>
    <property type="match status" value="1"/>
</dbReference>
<dbReference type="PANTHER" id="PTHR13479:SF40">
    <property type="entry name" value="SMALL RIBOSOMAL SUBUNIT PROTEIN BS18M"/>
    <property type="match status" value="1"/>
</dbReference>
<dbReference type="Pfam" id="PF01084">
    <property type="entry name" value="Ribosomal_S18"/>
    <property type="match status" value="1"/>
</dbReference>
<dbReference type="PRINTS" id="PR00974">
    <property type="entry name" value="RIBOSOMALS18"/>
</dbReference>
<dbReference type="SUPFAM" id="SSF46911">
    <property type="entry name" value="Ribosomal protein S18"/>
    <property type="match status" value="1"/>
</dbReference>
<dbReference type="PROSITE" id="PS00057">
    <property type="entry name" value="RIBOSOMAL_S18"/>
    <property type="match status" value="1"/>
</dbReference>
<feature type="chain" id="PRO_1000114431" description="Small ribosomal subunit protein bS18">
    <location>
        <begin position="1"/>
        <end position="94"/>
    </location>
</feature>
<feature type="region of interest" description="Disordered" evidence="2">
    <location>
        <begin position="1"/>
        <end position="29"/>
    </location>
</feature>
<feature type="compositionally biased region" description="Low complexity" evidence="2">
    <location>
        <begin position="1"/>
        <end position="12"/>
    </location>
</feature>
<feature type="compositionally biased region" description="Basic residues" evidence="2">
    <location>
        <begin position="16"/>
        <end position="29"/>
    </location>
</feature>
<keyword id="KW-1185">Reference proteome</keyword>
<keyword id="KW-0687">Ribonucleoprotein</keyword>
<keyword id="KW-0689">Ribosomal protein</keyword>
<keyword id="KW-0694">RNA-binding</keyword>
<keyword id="KW-0699">rRNA-binding</keyword>
<gene>
    <name evidence="1" type="primary">rpsR</name>
    <name type="ordered locus">LCK_00171</name>
</gene>
<proteinExistence type="inferred from homology"/>
<organism>
    <name type="scientific">Leuconostoc citreum (strain KM20)</name>
    <dbReference type="NCBI Taxonomy" id="349519"/>
    <lineage>
        <taxon>Bacteria</taxon>
        <taxon>Bacillati</taxon>
        <taxon>Bacillota</taxon>
        <taxon>Bacilli</taxon>
        <taxon>Lactobacillales</taxon>
        <taxon>Lactobacillaceae</taxon>
        <taxon>Leuconostoc</taxon>
    </lineage>
</organism>
<name>RS18_LEUCK</name>
<accession>B1MWV2</accession>
<evidence type="ECO:0000255" key="1">
    <source>
        <dbReference type="HAMAP-Rule" id="MF_00270"/>
    </source>
</evidence>
<evidence type="ECO:0000256" key="2">
    <source>
        <dbReference type="SAM" id="MobiDB-lite"/>
    </source>
</evidence>
<evidence type="ECO:0000305" key="3"/>
<protein>
    <recommendedName>
        <fullName evidence="1">Small ribosomal subunit protein bS18</fullName>
    </recommendedName>
    <alternativeName>
        <fullName evidence="3">30S ribosomal protein S18</fullName>
    </alternativeName>
</protein>
<comment type="function">
    <text evidence="1">Binds as a heterodimer with protein bS6 to the central domain of the 16S rRNA, where it helps stabilize the platform of the 30S subunit.</text>
</comment>
<comment type="subunit">
    <text evidence="1">Part of the 30S ribosomal subunit. Forms a tight heterodimer with protein bS6.</text>
</comment>
<comment type="similarity">
    <text evidence="1">Belongs to the bacterial ribosomal protein bS18 family.</text>
</comment>
<reference key="1">
    <citation type="journal article" date="2008" name="J. Bacteriol.">
        <title>Complete genome sequence of Leuconostoc citreum KM20.</title>
        <authorList>
            <person name="Kim J.F."/>
            <person name="Jeong H."/>
            <person name="Lee J.-S."/>
            <person name="Choi S.-H."/>
            <person name="Ha M."/>
            <person name="Hur C.-G."/>
            <person name="Kim J.-S."/>
            <person name="Lee S."/>
            <person name="Park H.-S."/>
            <person name="Park Y.-H."/>
            <person name="Oh T.K."/>
        </authorList>
    </citation>
    <scope>NUCLEOTIDE SEQUENCE [LARGE SCALE GENOMIC DNA]</scope>
    <source>
        <strain>KM20</strain>
    </source>
</reference>